<gene>
    <name evidence="1" type="primary">araB</name>
    <name type="ordered locus">ECIAI39_0066</name>
</gene>
<keyword id="KW-0054">Arabinose catabolism</keyword>
<keyword id="KW-0067">ATP-binding</keyword>
<keyword id="KW-0119">Carbohydrate metabolism</keyword>
<keyword id="KW-0418">Kinase</keyword>
<keyword id="KW-0547">Nucleotide-binding</keyword>
<keyword id="KW-0808">Transferase</keyword>
<evidence type="ECO:0000255" key="1">
    <source>
        <dbReference type="HAMAP-Rule" id="MF_00520"/>
    </source>
</evidence>
<dbReference type="EC" id="2.7.1.16" evidence="1"/>
<dbReference type="EMBL" id="CU928164">
    <property type="protein sequence ID" value="CAR16207.1"/>
    <property type="molecule type" value="Genomic_DNA"/>
</dbReference>
<dbReference type="RefSeq" id="WP_000951836.1">
    <property type="nucleotide sequence ID" value="NC_011750.1"/>
</dbReference>
<dbReference type="RefSeq" id="YP_002406114.1">
    <property type="nucleotide sequence ID" value="NC_011750.1"/>
</dbReference>
<dbReference type="SMR" id="B7NHG9"/>
<dbReference type="STRING" id="585057.ECIAI39_0066"/>
<dbReference type="KEGG" id="ect:ECIAI39_0066"/>
<dbReference type="PATRIC" id="fig|585057.6.peg.71"/>
<dbReference type="HOGENOM" id="CLU_009281_9_1_6"/>
<dbReference type="UniPathway" id="UPA00145">
    <property type="reaction ID" value="UER00566"/>
</dbReference>
<dbReference type="Proteomes" id="UP000000749">
    <property type="component" value="Chromosome"/>
</dbReference>
<dbReference type="GO" id="GO:0005737">
    <property type="term" value="C:cytoplasm"/>
    <property type="evidence" value="ECO:0007669"/>
    <property type="project" value="TreeGrafter"/>
</dbReference>
<dbReference type="GO" id="GO:0005524">
    <property type="term" value="F:ATP binding"/>
    <property type="evidence" value="ECO:0007669"/>
    <property type="project" value="UniProtKB-KW"/>
</dbReference>
<dbReference type="GO" id="GO:0019150">
    <property type="term" value="F:D-ribulokinase activity"/>
    <property type="evidence" value="ECO:0007669"/>
    <property type="project" value="RHEA"/>
</dbReference>
<dbReference type="GO" id="GO:0008741">
    <property type="term" value="F:ribulokinase activity"/>
    <property type="evidence" value="ECO:0007669"/>
    <property type="project" value="UniProtKB-UniRule"/>
</dbReference>
<dbReference type="GO" id="GO:0019569">
    <property type="term" value="P:L-arabinose catabolic process to xylulose 5-phosphate"/>
    <property type="evidence" value="ECO:0007669"/>
    <property type="project" value="UniProtKB-UniRule"/>
</dbReference>
<dbReference type="CDD" id="cd07781">
    <property type="entry name" value="ASKHA_NBD_FGGY_L-RBK"/>
    <property type="match status" value="1"/>
</dbReference>
<dbReference type="Gene3D" id="1.20.58.2240">
    <property type="match status" value="1"/>
</dbReference>
<dbReference type="Gene3D" id="3.30.420.40">
    <property type="match status" value="1"/>
</dbReference>
<dbReference type="HAMAP" id="MF_00520">
    <property type="entry name" value="Ribulokinase"/>
    <property type="match status" value="1"/>
</dbReference>
<dbReference type="InterPro" id="IPR043129">
    <property type="entry name" value="ATPase_NBD"/>
</dbReference>
<dbReference type="InterPro" id="IPR018485">
    <property type="entry name" value="FGGY_C"/>
</dbReference>
<dbReference type="InterPro" id="IPR005929">
    <property type="entry name" value="Ribulokinase"/>
</dbReference>
<dbReference type="NCBIfam" id="TIGR01234">
    <property type="entry name" value="L-ribulokinase"/>
    <property type="match status" value="1"/>
</dbReference>
<dbReference type="NCBIfam" id="NF003154">
    <property type="entry name" value="PRK04123.1"/>
    <property type="match status" value="1"/>
</dbReference>
<dbReference type="PANTHER" id="PTHR43435:SF4">
    <property type="entry name" value="FGGY CARBOHYDRATE KINASE DOMAIN-CONTAINING PROTEIN"/>
    <property type="match status" value="1"/>
</dbReference>
<dbReference type="PANTHER" id="PTHR43435">
    <property type="entry name" value="RIBULOKINASE"/>
    <property type="match status" value="1"/>
</dbReference>
<dbReference type="Pfam" id="PF02782">
    <property type="entry name" value="FGGY_C"/>
    <property type="match status" value="1"/>
</dbReference>
<dbReference type="SUPFAM" id="SSF53067">
    <property type="entry name" value="Actin-like ATPase domain"/>
    <property type="match status" value="2"/>
</dbReference>
<comment type="catalytic activity">
    <reaction evidence="1">
        <text>D-ribulose + ATP = D-ribulose 5-phosphate + ADP + H(+)</text>
        <dbReference type="Rhea" id="RHEA:17601"/>
        <dbReference type="ChEBI" id="CHEBI:15378"/>
        <dbReference type="ChEBI" id="CHEBI:17173"/>
        <dbReference type="ChEBI" id="CHEBI:30616"/>
        <dbReference type="ChEBI" id="CHEBI:58121"/>
        <dbReference type="ChEBI" id="CHEBI:456216"/>
        <dbReference type="EC" id="2.7.1.16"/>
    </reaction>
</comment>
<comment type="catalytic activity">
    <reaction evidence="1">
        <text>L-ribulose + ATP = L-ribulose 5-phosphate + ADP + H(+)</text>
        <dbReference type="Rhea" id="RHEA:22072"/>
        <dbReference type="ChEBI" id="CHEBI:15378"/>
        <dbReference type="ChEBI" id="CHEBI:16880"/>
        <dbReference type="ChEBI" id="CHEBI:30616"/>
        <dbReference type="ChEBI" id="CHEBI:58226"/>
        <dbReference type="ChEBI" id="CHEBI:456216"/>
        <dbReference type="EC" id="2.7.1.16"/>
    </reaction>
</comment>
<comment type="pathway">
    <text evidence="1">Carbohydrate degradation; L-arabinose degradation via L-ribulose; D-xylulose 5-phosphate from L-arabinose (bacterial route): step 2/3.</text>
</comment>
<comment type="similarity">
    <text evidence="1">Belongs to the ribulokinase family.</text>
</comment>
<proteinExistence type="inferred from homology"/>
<accession>B7NHG9</accession>
<sequence length="566" mass="61184">MAIAIGLDFGSDSVRALAVDCATGEEIATSVEWYPRWQKGQFCDAPNNQFRHHPRDYIESMEAALKTVLAELSAEQRAAVVGIGVDSTGSTPAPIDADGNVLALRPEFAENPNAMFVLWKDHTAVEEAEEITRLCHTPGNVDYSRYIGGIYSSEWFWAKILHVTRQDSAVAQSAASWIELCDWVPALLSGTTRPQDIRRGRCSAGHKSLWHESWGGLPPASFFDELDPILNRHLPSPLFTDTWTADIPVGTLCPEWAQRLGLPESVVISGGAFDCHMGAVGAGAQPNALVKVIGTSTCDILIADKQSVGERAVKGICGQVDGSVVPGFIGLEAGQSAFGDIYAWFGRVLGWPLEQLAAQHPELKDQINASQKQLLPALTEAWAKNPSLDHLPVVLDWFNGRRTPNANQRLKGVITDLNLATDAPLLFGGLIAATAFGARAIMECFTDQGIAVNNVMALGGIARKNQVIMQACCDVLNRPLQIVASDQCCALGAAIFAAVAAKVHADIPSAQQKMASAVEKTLQPRSEQAQRFEQLYRRYQQWAMSAEQHYLPTSAPAQAAQAVPTL</sequence>
<reference key="1">
    <citation type="journal article" date="2009" name="PLoS Genet.">
        <title>Organised genome dynamics in the Escherichia coli species results in highly diverse adaptive paths.</title>
        <authorList>
            <person name="Touchon M."/>
            <person name="Hoede C."/>
            <person name="Tenaillon O."/>
            <person name="Barbe V."/>
            <person name="Baeriswyl S."/>
            <person name="Bidet P."/>
            <person name="Bingen E."/>
            <person name="Bonacorsi S."/>
            <person name="Bouchier C."/>
            <person name="Bouvet O."/>
            <person name="Calteau A."/>
            <person name="Chiapello H."/>
            <person name="Clermont O."/>
            <person name="Cruveiller S."/>
            <person name="Danchin A."/>
            <person name="Diard M."/>
            <person name="Dossat C."/>
            <person name="Karoui M.E."/>
            <person name="Frapy E."/>
            <person name="Garry L."/>
            <person name="Ghigo J.M."/>
            <person name="Gilles A.M."/>
            <person name="Johnson J."/>
            <person name="Le Bouguenec C."/>
            <person name="Lescat M."/>
            <person name="Mangenot S."/>
            <person name="Martinez-Jehanne V."/>
            <person name="Matic I."/>
            <person name="Nassif X."/>
            <person name="Oztas S."/>
            <person name="Petit M.A."/>
            <person name="Pichon C."/>
            <person name="Rouy Z."/>
            <person name="Ruf C.S."/>
            <person name="Schneider D."/>
            <person name="Tourret J."/>
            <person name="Vacherie B."/>
            <person name="Vallenet D."/>
            <person name="Medigue C."/>
            <person name="Rocha E.P.C."/>
            <person name="Denamur E."/>
        </authorList>
    </citation>
    <scope>NUCLEOTIDE SEQUENCE [LARGE SCALE GENOMIC DNA]</scope>
    <source>
        <strain>IAI39 / ExPEC</strain>
    </source>
</reference>
<name>ARAB_ECO7I</name>
<protein>
    <recommendedName>
        <fullName evidence="1">Ribulokinase</fullName>
        <ecNumber evidence="1">2.7.1.16</ecNumber>
    </recommendedName>
</protein>
<organism>
    <name type="scientific">Escherichia coli O7:K1 (strain IAI39 / ExPEC)</name>
    <dbReference type="NCBI Taxonomy" id="585057"/>
    <lineage>
        <taxon>Bacteria</taxon>
        <taxon>Pseudomonadati</taxon>
        <taxon>Pseudomonadota</taxon>
        <taxon>Gammaproteobacteria</taxon>
        <taxon>Enterobacterales</taxon>
        <taxon>Enterobacteriaceae</taxon>
        <taxon>Escherichia</taxon>
    </lineage>
</organism>
<feature type="chain" id="PRO_1000127628" description="Ribulokinase">
    <location>
        <begin position="1"/>
        <end position="566"/>
    </location>
</feature>